<keyword id="KW-0413">Isomerase</keyword>
<keyword id="KW-0479">Metal-binding</keyword>
<keyword id="KW-0520">NAD</keyword>
<keyword id="KW-0521">NADP</keyword>
<keyword id="KW-0547">Nucleotide-binding</keyword>
<keyword id="KW-0630">Potassium</keyword>
<proteinExistence type="inferred from homology"/>
<sequence>MTDAVTAHEMQQYDQYTINEIGVPSLVLMERAALAGIEVLGAGQFDLSQVLVIAGLGNNGGDGVALARLLMQKGVHVDLLFVGDENRAAHNNAIQLEIAKKYGLTPVNKVKDFRQYTVIVDALFGIGLSKPVPIKLGEMIKRVNAANVPVVAIDVPSGINATTGDIMGSSIRATATVTFAYPKTGLLQGEGVKRSGSIFVKDIGIYSPAELHQFNPEIKEN</sequence>
<name>NNRE_WEIKK</name>
<protein>
    <recommendedName>
        <fullName evidence="1">NAD(P)H-hydrate epimerase</fullName>
        <ecNumber evidence="1">5.1.99.6</ecNumber>
    </recommendedName>
    <alternativeName>
        <fullName evidence="1">NAD(P)HX epimerase</fullName>
    </alternativeName>
</protein>
<evidence type="ECO:0000255" key="1">
    <source>
        <dbReference type="HAMAP-Rule" id="MF_01966"/>
    </source>
</evidence>
<feature type="chain" id="PRO_0000416380" description="NAD(P)H-hydrate epimerase">
    <location>
        <begin position="1"/>
        <end position="221"/>
    </location>
</feature>
<feature type="domain" description="YjeF N-terminal" evidence="1">
    <location>
        <begin position="10"/>
        <end position="211"/>
    </location>
</feature>
<feature type="binding site" evidence="1">
    <location>
        <begin position="58"/>
        <end position="62"/>
    </location>
    <ligand>
        <name>(6S)-NADPHX</name>
        <dbReference type="ChEBI" id="CHEBI:64076"/>
    </ligand>
</feature>
<feature type="binding site" evidence="1">
    <location>
        <position position="59"/>
    </location>
    <ligand>
        <name>K(+)</name>
        <dbReference type="ChEBI" id="CHEBI:29103"/>
    </ligand>
</feature>
<feature type="binding site" evidence="1">
    <location>
        <position position="121"/>
    </location>
    <ligand>
        <name>K(+)</name>
        <dbReference type="ChEBI" id="CHEBI:29103"/>
    </ligand>
</feature>
<feature type="binding site" evidence="1">
    <location>
        <begin position="125"/>
        <end position="131"/>
    </location>
    <ligand>
        <name>(6S)-NADPHX</name>
        <dbReference type="ChEBI" id="CHEBI:64076"/>
    </ligand>
</feature>
<feature type="binding site" evidence="1">
    <location>
        <position position="154"/>
    </location>
    <ligand>
        <name>(6S)-NADPHX</name>
        <dbReference type="ChEBI" id="CHEBI:64076"/>
    </ligand>
</feature>
<feature type="binding site" evidence="1">
    <location>
        <position position="157"/>
    </location>
    <ligand>
        <name>K(+)</name>
        <dbReference type="ChEBI" id="CHEBI:29103"/>
    </ligand>
</feature>
<reference key="1">
    <citation type="journal article" date="2011" name="J. Bacteriol.">
        <title>Complete genome sequence of Weissella koreensis KACC 15510, isolated from Kimchi.</title>
        <authorList>
            <person name="Lee S.H."/>
            <person name="Jung J.Y."/>
            <person name="Lee S.H."/>
            <person name="Jeon C.O."/>
        </authorList>
    </citation>
    <scope>NUCLEOTIDE SEQUENCE [LARGE SCALE GENOMIC DNA]</scope>
    <source>
        <strain>KACC 15510</strain>
    </source>
</reference>
<accession>F8I1D0</accession>
<dbReference type="EC" id="5.1.99.6" evidence="1"/>
<dbReference type="EMBL" id="CP002899">
    <property type="protein sequence ID" value="AEJ23681.1"/>
    <property type="molecule type" value="Genomic_DNA"/>
</dbReference>
<dbReference type="RefSeq" id="WP_013989549.1">
    <property type="nucleotide sequence ID" value="NC_015759.1"/>
</dbReference>
<dbReference type="SMR" id="F8I1D0"/>
<dbReference type="STRING" id="1045854.WKK_04035"/>
<dbReference type="KEGG" id="wko:WKK_04035"/>
<dbReference type="eggNOG" id="COG0062">
    <property type="taxonomic scope" value="Bacteria"/>
</dbReference>
<dbReference type="HOGENOM" id="CLU_024853_0_1_9"/>
<dbReference type="GO" id="GO:0000932">
    <property type="term" value="C:P-body"/>
    <property type="evidence" value="ECO:0007669"/>
    <property type="project" value="TreeGrafter"/>
</dbReference>
<dbReference type="GO" id="GO:0046872">
    <property type="term" value="F:metal ion binding"/>
    <property type="evidence" value="ECO:0007669"/>
    <property type="project" value="UniProtKB-KW"/>
</dbReference>
<dbReference type="GO" id="GO:0003729">
    <property type="term" value="F:mRNA binding"/>
    <property type="evidence" value="ECO:0007669"/>
    <property type="project" value="TreeGrafter"/>
</dbReference>
<dbReference type="GO" id="GO:0052856">
    <property type="term" value="F:NAD(P)HX epimerase activity"/>
    <property type="evidence" value="ECO:0007669"/>
    <property type="project" value="UniProtKB-UniRule"/>
</dbReference>
<dbReference type="GO" id="GO:0000166">
    <property type="term" value="F:nucleotide binding"/>
    <property type="evidence" value="ECO:0007669"/>
    <property type="project" value="UniProtKB-KW"/>
</dbReference>
<dbReference type="GO" id="GO:0031087">
    <property type="term" value="P:deadenylation-independent decapping of nuclear-transcribed mRNA"/>
    <property type="evidence" value="ECO:0007669"/>
    <property type="project" value="TreeGrafter"/>
</dbReference>
<dbReference type="GO" id="GO:0033962">
    <property type="term" value="P:P-body assembly"/>
    <property type="evidence" value="ECO:0007669"/>
    <property type="project" value="TreeGrafter"/>
</dbReference>
<dbReference type="Gene3D" id="3.40.50.10260">
    <property type="entry name" value="YjeF N-terminal domain"/>
    <property type="match status" value="1"/>
</dbReference>
<dbReference type="HAMAP" id="MF_01966">
    <property type="entry name" value="NADHX_epimerase"/>
    <property type="match status" value="1"/>
</dbReference>
<dbReference type="InterPro" id="IPR004443">
    <property type="entry name" value="YjeF_N_dom"/>
</dbReference>
<dbReference type="InterPro" id="IPR036652">
    <property type="entry name" value="YjeF_N_dom_sf"/>
</dbReference>
<dbReference type="NCBIfam" id="TIGR00197">
    <property type="entry name" value="yjeF_nterm"/>
    <property type="match status" value="1"/>
</dbReference>
<dbReference type="PANTHER" id="PTHR13612">
    <property type="entry name" value="ENHANCER OF MRNA-DECAPPING PROTEIN 3"/>
    <property type="match status" value="1"/>
</dbReference>
<dbReference type="PANTHER" id="PTHR13612:SF0">
    <property type="entry name" value="ENHANCER OF MRNA-DECAPPING PROTEIN 3"/>
    <property type="match status" value="1"/>
</dbReference>
<dbReference type="Pfam" id="PF03853">
    <property type="entry name" value="YjeF_N"/>
    <property type="match status" value="1"/>
</dbReference>
<dbReference type="SUPFAM" id="SSF64153">
    <property type="entry name" value="YjeF N-terminal domain-like"/>
    <property type="match status" value="1"/>
</dbReference>
<dbReference type="PROSITE" id="PS51385">
    <property type="entry name" value="YJEF_N"/>
    <property type="match status" value="1"/>
</dbReference>
<gene>
    <name evidence="1" type="primary">nnrE</name>
    <name type="ordered locus">WKK_04035</name>
</gene>
<organism>
    <name type="scientific">Weissella koreensis (strain KACC 15510)</name>
    <dbReference type="NCBI Taxonomy" id="1045854"/>
    <lineage>
        <taxon>Bacteria</taxon>
        <taxon>Bacillati</taxon>
        <taxon>Bacillota</taxon>
        <taxon>Bacilli</taxon>
        <taxon>Lactobacillales</taxon>
        <taxon>Lactobacillaceae</taxon>
        <taxon>Weissella</taxon>
    </lineage>
</organism>
<comment type="function">
    <text evidence="1">Catalyzes the epimerization of the S- and R-forms of NAD(P)HX, a damaged form of NAD(P)H that is a result of enzymatic or heat-dependent hydration. This is a prerequisite for the S-specific NAD(P)H-hydrate dehydratase to allow the repair of both epimers of NAD(P)HX.</text>
</comment>
<comment type="catalytic activity">
    <reaction evidence="1">
        <text>(6R)-NADHX = (6S)-NADHX</text>
        <dbReference type="Rhea" id="RHEA:32215"/>
        <dbReference type="ChEBI" id="CHEBI:64074"/>
        <dbReference type="ChEBI" id="CHEBI:64075"/>
        <dbReference type="EC" id="5.1.99.6"/>
    </reaction>
</comment>
<comment type="catalytic activity">
    <reaction evidence="1">
        <text>(6R)-NADPHX = (6S)-NADPHX</text>
        <dbReference type="Rhea" id="RHEA:32227"/>
        <dbReference type="ChEBI" id="CHEBI:64076"/>
        <dbReference type="ChEBI" id="CHEBI:64077"/>
        <dbReference type="EC" id="5.1.99.6"/>
    </reaction>
</comment>
<comment type="cofactor">
    <cofactor evidence="1">
        <name>K(+)</name>
        <dbReference type="ChEBI" id="CHEBI:29103"/>
    </cofactor>
    <text evidence="1">Binds 1 potassium ion per subunit.</text>
</comment>
<comment type="similarity">
    <text evidence="1">Belongs to the NnrE/AIBP family.</text>
</comment>